<accession>Q72XC0</accession>
<comment type="subunit">
    <text evidence="1">Part of the 50S ribosomal subunit.</text>
</comment>
<comment type="similarity">
    <text evidence="1">Belongs to the bacterial ribosomal protein bL31 family. Type B subfamily.</text>
</comment>
<evidence type="ECO:0000255" key="1">
    <source>
        <dbReference type="HAMAP-Rule" id="MF_00502"/>
    </source>
</evidence>
<evidence type="ECO:0000305" key="2"/>
<keyword id="KW-0687">Ribonucleoprotein</keyword>
<keyword id="KW-0689">Ribosomal protein</keyword>
<name>RL31B_BACC1</name>
<sequence>MKAGIHPDYKKVVFMDTNTGFKFLSGSTRGSNETVEWEDGNTYPLLKVEISSDSHPFYTGRQKFATADGRVDRFNKKYGLK</sequence>
<gene>
    <name evidence="1" type="primary">rpmE2</name>
    <name type="synonym">rpmE</name>
    <name type="ordered locus">BCE_5458</name>
</gene>
<feature type="chain" id="PRO_0000173195" description="Large ribosomal subunit protein bL31B">
    <location>
        <begin position="1"/>
        <end position="81"/>
    </location>
</feature>
<protein>
    <recommendedName>
        <fullName evidence="1">Large ribosomal subunit protein bL31B</fullName>
    </recommendedName>
    <alternativeName>
        <fullName evidence="2">50S ribosomal protein L31 type B</fullName>
    </alternativeName>
</protein>
<dbReference type="EMBL" id="AE017194">
    <property type="protein sequence ID" value="AAS44358.1"/>
    <property type="molecule type" value="Genomic_DNA"/>
</dbReference>
<dbReference type="SMR" id="Q72XC0"/>
<dbReference type="KEGG" id="bca:BCE_5458"/>
<dbReference type="HOGENOM" id="CLU_114306_2_2_9"/>
<dbReference type="Proteomes" id="UP000002527">
    <property type="component" value="Chromosome"/>
</dbReference>
<dbReference type="GO" id="GO:1990904">
    <property type="term" value="C:ribonucleoprotein complex"/>
    <property type="evidence" value="ECO:0007669"/>
    <property type="project" value="UniProtKB-KW"/>
</dbReference>
<dbReference type="GO" id="GO:0005840">
    <property type="term" value="C:ribosome"/>
    <property type="evidence" value="ECO:0007669"/>
    <property type="project" value="UniProtKB-KW"/>
</dbReference>
<dbReference type="GO" id="GO:0003735">
    <property type="term" value="F:structural constituent of ribosome"/>
    <property type="evidence" value="ECO:0007669"/>
    <property type="project" value="InterPro"/>
</dbReference>
<dbReference type="GO" id="GO:0006412">
    <property type="term" value="P:translation"/>
    <property type="evidence" value="ECO:0007669"/>
    <property type="project" value="UniProtKB-UniRule"/>
</dbReference>
<dbReference type="Gene3D" id="4.10.830.30">
    <property type="entry name" value="Ribosomal protein L31"/>
    <property type="match status" value="1"/>
</dbReference>
<dbReference type="HAMAP" id="MF_00502">
    <property type="entry name" value="Ribosomal_bL31_2"/>
    <property type="match status" value="1"/>
</dbReference>
<dbReference type="InterPro" id="IPR034704">
    <property type="entry name" value="Ribosomal_bL28/bL31-like_sf"/>
</dbReference>
<dbReference type="InterPro" id="IPR002150">
    <property type="entry name" value="Ribosomal_bL31"/>
</dbReference>
<dbReference type="InterPro" id="IPR027493">
    <property type="entry name" value="Ribosomal_bL31_B"/>
</dbReference>
<dbReference type="InterPro" id="IPR042105">
    <property type="entry name" value="Ribosomal_bL31_sf"/>
</dbReference>
<dbReference type="NCBIfam" id="TIGR00105">
    <property type="entry name" value="L31"/>
    <property type="match status" value="1"/>
</dbReference>
<dbReference type="NCBIfam" id="NF002462">
    <property type="entry name" value="PRK01678.1"/>
    <property type="match status" value="1"/>
</dbReference>
<dbReference type="PANTHER" id="PTHR33280">
    <property type="entry name" value="50S RIBOSOMAL PROTEIN L31, CHLOROPLASTIC"/>
    <property type="match status" value="1"/>
</dbReference>
<dbReference type="PANTHER" id="PTHR33280:SF1">
    <property type="entry name" value="LARGE RIBOSOMAL SUBUNIT PROTEIN BL31C"/>
    <property type="match status" value="1"/>
</dbReference>
<dbReference type="Pfam" id="PF01197">
    <property type="entry name" value="Ribosomal_L31"/>
    <property type="match status" value="1"/>
</dbReference>
<dbReference type="PRINTS" id="PR01249">
    <property type="entry name" value="RIBOSOMALL31"/>
</dbReference>
<dbReference type="SUPFAM" id="SSF143800">
    <property type="entry name" value="L28p-like"/>
    <property type="match status" value="1"/>
</dbReference>
<dbReference type="PROSITE" id="PS01143">
    <property type="entry name" value="RIBOSOMAL_L31"/>
    <property type="match status" value="1"/>
</dbReference>
<organism>
    <name type="scientific">Bacillus cereus (strain ATCC 10987 / NRS 248)</name>
    <dbReference type="NCBI Taxonomy" id="222523"/>
    <lineage>
        <taxon>Bacteria</taxon>
        <taxon>Bacillati</taxon>
        <taxon>Bacillota</taxon>
        <taxon>Bacilli</taxon>
        <taxon>Bacillales</taxon>
        <taxon>Bacillaceae</taxon>
        <taxon>Bacillus</taxon>
        <taxon>Bacillus cereus group</taxon>
    </lineage>
</organism>
<reference key="1">
    <citation type="journal article" date="2004" name="Nucleic Acids Res.">
        <title>The genome sequence of Bacillus cereus ATCC 10987 reveals metabolic adaptations and a large plasmid related to Bacillus anthracis pXO1.</title>
        <authorList>
            <person name="Rasko D.A."/>
            <person name="Ravel J."/>
            <person name="Oekstad O.A."/>
            <person name="Helgason E."/>
            <person name="Cer R.Z."/>
            <person name="Jiang L."/>
            <person name="Shores K.A."/>
            <person name="Fouts D.E."/>
            <person name="Tourasse N.J."/>
            <person name="Angiuoli S.V."/>
            <person name="Kolonay J.F."/>
            <person name="Nelson W.C."/>
            <person name="Kolstoe A.-B."/>
            <person name="Fraser C.M."/>
            <person name="Read T.D."/>
        </authorList>
    </citation>
    <scope>NUCLEOTIDE SEQUENCE [LARGE SCALE GENOMIC DNA]</scope>
    <source>
        <strain>ATCC 10987 / NRS 248</strain>
    </source>
</reference>
<proteinExistence type="inferred from homology"/>